<protein>
    <recommendedName>
        <fullName evidence="1">Acetyl-coenzyme A carboxylase carboxyl transferase subunit alpha</fullName>
        <shortName evidence="1">ACCase subunit alpha</shortName>
        <shortName evidence="1">Acetyl-CoA carboxylase carboxyltransferase subunit alpha</shortName>
        <ecNumber evidence="1">2.1.3.15</ecNumber>
    </recommendedName>
</protein>
<proteinExistence type="inferred from homology"/>
<sequence>MDLNCLDFEQPILKIESKIHSLMKLIHHDKKLAINIYEKINHLKQKSVELTQKIFSNLSAWQIAQLARHPYRPYTLDYIAYIFDDFDELSGDRVYGDDKAIVGGIGRLNSRPVMVIGHQKGRDIQEKIRRNFGMSAPEGYRKALRLMKLAERFNLPIFTFIDTPGAYPGIGAEKRGQSIAIAKNLRAMTTLNIPIICTVIGEGGSGGALAISVGDKINMLQYSIYSVISPEGCASILWKNVQKAPLAAEVMGITAHRLKQLKLIDTVIPEPLGGAHRDIVSTSISIKTQLLLDLVELDALQEEKLLTRRYQKFMNYGYC</sequence>
<accession>Q7VRD0</accession>
<feature type="chain" id="PRO_0000223737" description="Acetyl-coenzyme A carboxylase carboxyl transferase subunit alpha">
    <location>
        <begin position="1"/>
        <end position="319"/>
    </location>
</feature>
<feature type="domain" description="CoA carboxyltransferase C-terminal" evidence="2">
    <location>
        <begin position="43"/>
        <end position="296"/>
    </location>
</feature>
<evidence type="ECO:0000255" key="1">
    <source>
        <dbReference type="HAMAP-Rule" id="MF_00823"/>
    </source>
</evidence>
<evidence type="ECO:0000255" key="2">
    <source>
        <dbReference type="PROSITE-ProRule" id="PRU01137"/>
    </source>
</evidence>
<reference key="1">
    <citation type="journal article" date="2003" name="Proc. Natl. Acad. Sci. U.S.A.">
        <title>The genome sequence of Blochmannia floridanus: comparative analysis of reduced genomes.</title>
        <authorList>
            <person name="Gil R."/>
            <person name="Silva F.J."/>
            <person name="Zientz E."/>
            <person name="Delmotte F."/>
            <person name="Gonzalez-Candelas F."/>
            <person name="Latorre A."/>
            <person name="Rausell C."/>
            <person name="Kamerbeek J."/>
            <person name="Gadau J."/>
            <person name="Hoelldobler B."/>
            <person name="van Ham R.C.H.J."/>
            <person name="Gross R."/>
            <person name="Moya A."/>
        </authorList>
    </citation>
    <scope>NUCLEOTIDE SEQUENCE [LARGE SCALE GENOMIC DNA]</scope>
</reference>
<dbReference type="EC" id="2.1.3.15" evidence="1"/>
<dbReference type="EMBL" id="BX248583">
    <property type="protein sequence ID" value="CAD83358.1"/>
    <property type="molecule type" value="Genomic_DNA"/>
</dbReference>
<dbReference type="SMR" id="Q7VRD0"/>
<dbReference type="STRING" id="203907.Bfl287"/>
<dbReference type="KEGG" id="bfl:Bfl287"/>
<dbReference type="eggNOG" id="COG0825">
    <property type="taxonomic scope" value="Bacteria"/>
</dbReference>
<dbReference type="HOGENOM" id="CLU_015486_0_2_6"/>
<dbReference type="OrthoDB" id="9808023at2"/>
<dbReference type="UniPathway" id="UPA00655">
    <property type="reaction ID" value="UER00711"/>
</dbReference>
<dbReference type="Proteomes" id="UP000002192">
    <property type="component" value="Chromosome"/>
</dbReference>
<dbReference type="GO" id="GO:0009317">
    <property type="term" value="C:acetyl-CoA carboxylase complex"/>
    <property type="evidence" value="ECO:0007669"/>
    <property type="project" value="InterPro"/>
</dbReference>
<dbReference type="GO" id="GO:0003989">
    <property type="term" value="F:acetyl-CoA carboxylase activity"/>
    <property type="evidence" value="ECO:0007669"/>
    <property type="project" value="InterPro"/>
</dbReference>
<dbReference type="GO" id="GO:0005524">
    <property type="term" value="F:ATP binding"/>
    <property type="evidence" value="ECO:0007669"/>
    <property type="project" value="UniProtKB-KW"/>
</dbReference>
<dbReference type="GO" id="GO:0016743">
    <property type="term" value="F:carboxyl- or carbamoyltransferase activity"/>
    <property type="evidence" value="ECO:0007669"/>
    <property type="project" value="UniProtKB-UniRule"/>
</dbReference>
<dbReference type="GO" id="GO:0006633">
    <property type="term" value="P:fatty acid biosynthetic process"/>
    <property type="evidence" value="ECO:0007669"/>
    <property type="project" value="UniProtKB-KW"/>
</dbReference>
<dbReference type="GO" id="GO:2001295">
    <property type="term" value="P:malonyl-CoA biosynthetic process"/>
    <property type="evidence" value="ECO:0007669"/>
    <property type="project" value="UniProtKB-UniRule"/>
</dbReference>
<dbReference type="FunFam" id="3.90.226.10:FF:000008">
    <property type="entry name" value="Acetyl-coenzyme A carboxylase carboxyl transferase subunit alpha"/>
    <property type="match status" value="1"/>
</dbReference>
<dbReference type="Gene3D" id="3.90.226.10">
    <property type="entry name" value="2-enoyl-CoA Hydratase, Chain A, domain 1"/>
    <property type="match status" value="1"/>
</dbReference>
<dbReference type="HAMAP" id="MF_00823">
    <property type="entry name" value="AcetylCoA_CT_alpha"/>
    <property type="match status" value="1"/>
</dbReference>
<dbReference type="InterPro" id="IPR001095">
    <property type="entry name" value="Acetyl_CoA_COase_a_su"/>
</dbReference>
<dbReference type="InterPro" id="IPR029045">
    <property type="entry name" value="ClpP/crotonase-like_dom_sf"/>
</dbReference>
<dbReference type="InterPro" id="IPR011763">
    <property type="entry name" value="COA_CT_C"/>
</dbReference>
<dbReference type="NCBIfam" id="TIGR00513">
    <property type="entry name" value="accA"/>
    <property type="match status" value="1"/>
</dbReference>
<dbReference type="NCBIfam" id="NF041504">
    <property type="entry name" value="AccA_sub"/>
    <property type="match status" value="1"/>
</dbReference>
<dbReference type="NCBIfam" id="NF004344">
    <property type="entry name" value="PRK05724.1"/>
    <property type="match status" value="1"/>
</dbReference>
<dbReference type="PANTHER" id="PTHR42853">
    <property type="entry name" value="ACETYL-COENZYME A CARBOXYLASE CARBOXYL TRANSFERASE SUBUNIT ALPHA"/>
    <property type="match status" value="1"/>
</dbReference>
<dbReference type="PANTHER" id="PTHR42853:SF3">
    <property type="entry name" value="ACETYL-COENZYME A CARBOXYLASE CARBOXYL TRANSFERASE SUBUNIT ALPHA, CHLOROPLASTIC"/>
    <property type="match status" value="1"/>
</dbReference>
<dbReference type="Pfam" id="PF03255">
    <property type="entry name" value="ACCA"/>
    <property type="match status" value="1"/>
</dbReference>
<dbReference type="PRINTS" id="PR01069">
    <property type="entry name" value="ACCCTRFRASEA"/>
</dbReference>
<dbReference type="SUPFAM" id="SSF52096">
    <property type="entry name" value="ClpP/crotonase"/>
    <property type="match status" value="1"/>
</dbReference>
<dbReference type="PROSITE" id="PS50989">
    <property type="entry name" value="COA_CT_CTER"/>
    <property type="match status" value="1"/>
</dbReference>
<comment type="function">
    <text evidence="1">Component of the acetyl coenzyme A carboxylase (ACC) complex. First, biotin carboxylase catalyzes the carboxylation of biotin on its carrier protein (BCCP) and then the CO(2) group is transferred by the carboxyltransferase to acetyl-CoA to form malonyl-CoA.</text>
</comment>
<comment type="catalytic activity">
    <reaction evidence="1">
        <text>N(6)-carboxybiotinyl-L-lysyl-[protein] + acetyl-CoA = N(6)-biotinyl-L-lysyl-[protein] + malonyl-CoA</text>
        <dbReference type="Rhea" id="RHEA:54728"/>
        <dbReference type="Rhea" id="RHEA-COMP:10505"/>
        <dbReference type="Rhea" id="RHEA-COMP:10506"/>
        <dbReference type="ChEBI" id="CHEBI:57288"/>
        <dbReference type="ChEBI" id="CHEBI:57384"/>
        <dbReference type="ChEBI" id="CHEBI:83144"/>
        <dbReference type="ChEBI" id="CHEBI:83145"/>
        <dbReference type="EC" id="2.1.3.15"/>
    </reaction>
</comment>
<comment type="pathway">
    <text evidence="1">Lipid metabolism; malonyl-CoA biosynthesis; malonyl-CoA from acetyl-CoA: step 1/1.</text>
</comment>
<comment type="subunit">
    <text evidence="1">Acetyl-CoA carboxylase is a heterohexamer composed of biotin carboxyl carrier protein (AccB), biotin carboxylase (AccC) and two subunits each of ACCase subunit alpha (AccA) and ACCase subunit beta (AccD).</text>
</comment>
<comment type="subcellular location">
    <subcellularLocation>
        <location evidence="1">Cytoplasm</location>
    </subcellularLocation>
</comment>
<comment type="similarity">
    <text evidence="1">Belongs to the AccA family.</text>
</comment>
<name>ACCA_BLOFL</name>
<gene>
    <name evidence="1" type="primary">accA</name>
    <name type="ordered locus">Bfl287</name>
</gene>
<organism>
    <name type="scientific">Blochmanniella floridana</name>
    <dbReference type="NCBI Taxonomy" id="203907"/>
    <lineage>
        <taxon>Bacteria</taxon>
        <taxon>Pseudomonadati</taxon>
        <taxon>Pseudomonadota</taxon>
        <taxon>Gammaproteobacteria</taxon>
        <taxon>Enterobacterales</taxon>
        <taxon>Enterobacteriaceae</taxon>
        <taxon>ant endosymbionts</taxon>
        <taxon>Candidatus Blochmanniella</taxon>
    </lineage>
</organism>
<keyword id="KW-0067">ATP-binding</keyword>
<keyword id="KW-0963">Cytoplasm</keyword>
<keyword id="KW-0275">Fatty acid biosynthesis</keyword>
<keyword id="KW-0276">Fatty acid metabolism</keyword>
<keyword id="KW-0444">Lipid biosynthesis</keyword>
<keyword id="KW-0443">Lipid metabolism</keyword>
<keyword id="KW-0547">Nucleotide-binding</keyword>
<keyword id="KW-1185">Reference proteome</keyword>
<keyword id="KW-0808">Transferase</keyword>